<proteinExistence type="inferred from homology"/>
<organism>
    <name type="scientific">Yersinia pestis (strain Pestoides F)</name>
    <dbReference type="NCBI Taxonomy" id="386656"/>
    <lineage>
        <taxon>Bacteria</taxon>
        <taxon>Pseudomonadati</taxon>
        <taxon>Pseudomonadota</taxon>
        <taxon>Gammaproteobacteria</taxon>
        <taxon>Enterobacterales</taxon>
        <taxon>Yersiniaceae</taxon>
        <taxon>Yersinia</taxon>
    </lineage>
</organism>
<protein>
    <recommendedName>
        <fullName>Virulence-associated V antigen</fullName>
    </recommendedName>
    <alternativeName>
        <fullName>Low calcium response locus protein V</fullName>
    </alternativeName>
</protein>
<reference key="1">
    <citation type="journal article" date="2000" name="J. Clin. Microbiol.">
        <title>Diversity in a variable-number tandem repeat from Yersinia pestis.</title>
        <authorList>
            <person name="Adair D.M."/>
            <person name="Worsham P.L."/>
            <person name="Hill K.K."/>
            <person name="Klevytska A.M."/>
            <person name="Jackson P.J."/>
            <person name="Friedlander A.M."/>
            <person name="Keim P."/>
        </authorList>
    </citation>
    <scope>NUCLEOTIDE SEQUENCE [GENOMIC DNA]</scope>
</reference>
<reference key="2">
    <citation type="submission" date="2007-02" db="EMBL/GenBank/DDBJ databases">
        <title>Complete sequence of plasmid pCD of Yersinia pestis Pestoides F.</title>
        <authorList>
            <consortium name="US DOE Joint Genome Institute"/>
            <person name="Copeland A."/>
            <person name="Lucas S."/>
            <person name="Lapidus A."/>
            <person name="Barry K."/>
            <person name="Detter J.C."/>
            <person name="Glavina del Rio T."/>
            <person name="Hammon N."/>
            <person name="Israni S."/>
            <person name="Dalin E."/>
            <person name="Tice H."/>
            <person name="Pitluck S."/>
            <person name="Di Bartolo G."/>
            <person name="Chain P."/>
            <person name="Malfatti S."/>
            <person name="Shin M."/>
            <person name="Vergez L."/>
            <person name="Schmutz J."/>
            <person name="Larimer F."/>
            <person name="Land M."/>
            <person name="Hauser L."/>
            <person name="Worsham P."/>
            <person name="Chu M."/>
            <person name="Bearden S."/>
            <person name="Garcia E."/>
            <person name="Richardson P."/>
        </authorList>
    </citation>
    <scope>NUCLEOTIDE SEQUENCE [LARGE SCALE GENOMIC DNA]</scope>
    <source>
        <strain>Pestoides F</strain>
    </source>
</reference>
<gene>
    <name type="primary">lcrV</name>
    <name type="synonym">icrV</name>
    <name type="ordered locus">YPDSF_3986</name>
</gene>
<dbReference type="EMBL" id="AF167309">
    <property type="protein sequence ID" value="AAF64076.1"/>
    <property type="molecule type" value="Genomic_DNA"/>
</dbReference>
<dbReference type="EMBL" id="CP000669">
    <property type="protein sequence ID" value="ABP42325.1"/>
    <property type="molecule type" value="Genomic_DNA"/>
</dbReference>
<dbReference type="RefSeq" id="WP_011171995.1">
    <property type="nucleotide sequence ID" value="NZ_CP009713.1"/>
</dbReference>
<dbReference type="SMR" id="A4TSQ1"/>
<dbReference type="KEGG" id="ypp:YPDSF_3986"/>
<dbReference type="PATRIC" id="fig|386656.14.peg.4354"/>
<dbReference type="GO" id="GO:0005576">
    <property type="term" value="C:extracellular region"/>
    <property type="evidence" value="ECO:0007669"/>
    <property type="project" value="UniProtKB-SubCell"/>
</dbReference>
<dbReference type="InterPro" id="IPR005413">
    <property type="entry name" value="LowCa_resp_V_Ag"/>
</dbReference>
<dbReference type="InterPro" id="IPR036139">
    <property type="entry name" value="Vir_assoc_V_ag_sf"/>
</dbReference>
<dbReference type="Pfam" id="PF04792">
    <property type="entry name" value="LcrV"/>
    <property type="match status" value="1"/>
</dbReference>
<dbReference type="PRINTS" id="PR01592">
    <property type="entry name" value="LCRVANTIGEN"/>
</dbReference>
<dbReference type="SUPFAM" id="SSF103388">
    <property type="entry name" value="Virulence-associated V antigen"/>
    <property type="match status" value="1"/>
</dbReference>
<evidence type="ECO:0000250" key="1"/>
<geneLocation type="plasmid">
    <name>pCD</name>
</geneLocation>
<accession>A4TSQ1</accession>
<accession>O68697</accession>
<accession>P21206</accession>
<accession>Q9L9Q7</accession>
<accession>Q9L9Q8</accession>
<sequence>MIRAYEQNPQHFIEDLEKVRVEQLTGHGSSVLEELVQLVKDKNIDISIKYDPRKDSEVFANRVITDDIELLKKILAYFLPEDAILKGGHYDNQLQNGIKRVKEFLESSPNTQWELRAFMAVMHFSLTADRIDDDILKVIVDSMNHHGDARSKLREELAELTAELKIYSVIQAEINKHLSSSGTINIHDKSINLMDKNLYGYTDEEIFKASAEYKILEKMPQTTIQVDGSEKKIVSIKDFLGSENKRTGALGNLKNSYSYNKDNNELSHFATTCSDKSRPLNDLVSQKTTQLSDITSRFNSAIEALNRFIQKYDSVMQRLLDDTR</sequence>
<keyword id="KW-0614">Plasmid</keyword>
<keyword id="KW-0964">Secreted</keyword>
<keyword id="KW-0843">Virulence</keyword>
<name>LCRV_YERPP</name>
<comment type="function">
    <text evidence="1">Possibly involved in calcium regulation of YOP expression, which includes the export process.</text>
</comment>
<comment type="subcellular location">
    <subcellularLocation>
        <location evidence="1">Secreted</location>
    </subcellularLocation>
</comment>
<feature type="chain" id="PRO_0000293453" description="Virulence-associated V antigen">
    <location>
        <begin position="1"/>
        <end position="324"/>
    </location>
</feature>